<accession>A5VT61</accession>
<reference key="1">
    <citation type="journal article" date="2009" name="PLoS ONE">
        <title>Genome degradation in Brucella ovis corresponds with narrowing of its host range and tissue tropism.</title>
        <authorList>
            <person name="Tsolis R.M."/>
            <person name="Seshadri R."/>
            <person name="Santos R.L."/>
            <person name="Sangari F.J."/>
            <person name="Lobo J.M."/>
            <person name="de Jong M.F."/>
            <person name="Ren Q."/>
            <person name="Myers G."/>
            <person name="Brinkac L.M."/>
            <person name="Nelson W.C."/>
            <person name="Deboy R.T."/>
            <person name="Angiuoli S."/>
            <person name="Khouri H."/>
            <person name="Dimitrov G."/>
            <person name="Robinson J.R."/>
            <person name="Mulligan S."/>
            <person name="Walker R.L."/>
            <person name="Elzer P.E."/>
            <person name="Hassan K.A."/>
            <person name="Paulsen I.T."/>
        </authorList>
    </citation>
    <scope>NUCLEOTIDE SEQUENCE [LARGE SCALE GENOMIC DNA]</scope>
    <source>
        <strain>ATCC 25840 / 63/290 / NCTC 10512</strain>
    </source>
</reference>
<gene>
    <name evidence="1" type="primary">trpA</name>
    <name type="ordered locus">BOV_2024</name>
</gene>
<keyword id="KW-0028">Amino-acid biosynthesis</keyword>
<keyword id="KW-0057">Aromatic amino acid biosynthesis</keyword>
<keyword id="KW-0456">Lyase</keyword>
<keyword id="KW-0822">Tryptophan biosynthesis</keyword>
<comment type="function">
    <text evidence="1">The alpha subunit is responsible for the aldol cleavage of indoleglycerol phosphate to indole and glyceraldehyde 3-phosphate.</text>
</comment>
<comment type="catalytic activity">
    <reaction evidence="1">
        <text>(1S,2R)-1-C-(indol-3-yl)glycerol 3-phosphate + L-serine = D-glyceraldehyde 3-phosphate + L-tryptophan + H2O</text>
        <dbReference type="Rhea" id="RHEA:10532"/>
        <dbReference type="ChEBI" id="CHEBI:15377"/>
        <dbReference type="ChEBI" id="CHEBI:33384"/>
        <dbReference type="ChEBI" id="CHEBI:57912"/>
        <dbReference type="ChEBI" id="CHEBI:58866"/>
        <dbReference type="ChEBI" id="CHEBI:59776"/>
        <dbReference type="EC" id="4.2.1.20"/>
    </reaction>
</comment>
<comment type="pathway">
    <text evidence="1">Amino-acid biosynthesis; L-tryptophan biosynthesis; L-tryptophan from chorismate: step 5/5.</text>
</comment>
<comment type="subunit">
    <text evidence="1">Tetramer of two alpha and two beta chains.</text>
</comment>
<comment type="similarity">
    <text evidence="1">Belongs to the TrpA family.</text>
</comment>
<evidence type="ECO:0000255" key="1">
    <source>
        <dbReference type="HAMAP-Rule" id="MF_00131"/>
    </source>
</evidence>
<sequence>MTTRIDTKFAELKAEGRPALVTYFMGGDPDLETALKVMKALPKAGADVIELGMPFSDPMADGPAIQAAGLRPLNAGQTLAKTLYMAAEFRKEDDTTPIVMMGYYNPIYVYGVERFLTDAKASGVDGLIVVDLPSEMDAELCIPAMKAGINFIRLTTPTTDDKRLPKVLHNSSGFVYYVSMNGITGAAIADTAKVGEAVRHIKKSTDLPICVGFGVKTPEQAAAIATHADGVVVGTAIVNAIAGELDEKGKVKGDPVAAATRLVHALAESVRATRLEAAQ</sequence>
<name>TRPA_BRUO2</name>
<protein>
    <recommendedName>
        <fullName evidence="1">Tryptophan synthase alpha chain</fullName>
        <ecNumber evidence="1">4.2.1.20</ecNumber>
    </recommendedName>
</protein>
<feature type="chain" id="PRO_1000018172" description="Tryptophan synthase alpha chain">
    <location>
        <begin position="1"/>
        <end position="279"/>
    </location>
</feature>
<feature type="active site" description="Proton acceptor" evidence="1">
    <location>
        <position position="50"/>
    </location>
</feature>
<feature type="active site" description="Proton acceptor" evidence="1">
    <location>
        <position position="61"/>
    </location>
</feature>
<dbReference type="EC" id="4.2.1.20" evidence="1"/>
<dbReference type="EMBL" id="CP000708">
    <property type="protein sequence ID" value="ABQ61883.1"/>
    <property type="molecule type" value="Genomic_DNA"/>
</dbReference>
<dbReference type="RefSeq" id="WP_006014518.1">
    <property type="nucleotide sequence ID" value="NC_009505.1"/>
</dbReference>
<dbReference type="SMR" id="A5VT61"/>
<dbReference type="GeneID" id="45125358"/>
<dbReference type="KEGG" id="bov:BOV_2024"/>
<dbReference type="HOGENOM" id="CLU_016734_0_0_5"/>
<dbReference type="PhylomeDB" id="A5VT61"/>
<dbReference type="UniPathway" id="UPA00035">
    <property type="reaction ID" value="UER00044"/>
</dbReference>
<dbReference type="Proteomes" id="UP000006383">
    <property type="component" value="Chromosome I"/>
</dbReference>
<dbReference type="GO" id="GO:0005829">
    <property type="term" value="C:cytosol"/>
    <property type="evidence" value="ECO:0007669"/>
    <property type="project" value="TreeGrafter"/>
</dbReference>
<dbReference type="GO" id="GO:0004834">
    <property type="term" value="F:tryptophan synthase activity"/>
    <property type="evidence" value="ECO:0007669"/>
    <property type="project" value="UniProtKB-UniRule"/>
</dbReference>
<dbReference type="CDD" id="cd04724">
    <property type="entry name" value="Tryptophan_synthase_alpha"/>
    <property type="match status" value="1"/>
</dbReference>
<dbReference type="FunFam" id="3.20.20.70:FF:000037">
    <property type="entry name" value="Tryptophan synthase alpha chain"/>
    <property type="match status" value="1"/>
</dbReference>
<dbReference type="Gene3D" id="3.20.20.70">
    <property type="entry name" value="Aldolase class I"/>
    <property type="match status" value="1"/>
</dbReference>
<dbReference type="HAMAP" id="MF_00131">
    <property type="entry name" value="Trp_synth_alpha"/>
    <property type="match status" value="1"/>
</dbReference>
<dbReference type="InterPro" id="IPR013785">
    <property type="entry name" value="Aldolase_TIM"/>
</dbReference>
<dbReference type="InterPro" id="IPR011060">
    <property type="entry name" value="RibuloseP-bd_barrel"/>
</dbReference>
<dbReference type="InterPro" id="IPR018204">
    <property type="entry name" value="Trp_synthase_alpha_AS"/>
</dbReference>
<dbReference type="InterPro" id="IPR002028">
    <property type="entry name" value="Trp_synthase_suA"/>
</dbReference>
<dbReference type="NCBIfam" id="TIGR00262">
    <property type="entry name" value="trpA"/>
    <property type="match status" value="1"/>
</dbReference>
<dbReference type="PANTHER" id="PTHR43406:SF1">
    <property type="entry name" value="TRYPTOPHAN SYNTHASE ALPHA CHAIN, CHLOROPLASTIC"/>
    <property type="match status" value="1"/>
</dbReference>
<dbReference type="PANTHER" id="PTHR43406">
    <property type="entry name" value="TRYPTOPHAN SYNTHASE, ALPHA CHAIN"/>
    <property type="match status" value="1"/>
</dbReference>
<dbReference type="Pfam" id="PF00290">
    <property type="entry name" value="Trp_syntA"/>
    <property type="match status" value="1"/>
</dbReference>
<dbReference type="SUPFAM" id="SSF51366">
    <property type="entry name" value="Ribulose-phoshate binding barrel"/>
    <property type="match status" value="1"/>
</dbReference>
<dbReference type="PROSITE" id="PS00167">
    <property type="entry name" value="TRP_SYNTHASE_ALPHA"/>
    <property type="match status" value="1"/>
</dbReference>
<proteinExistence type="inferred from homology"/>
<organism>
    <name type="scientific">Brucella ovis (strain ATCC 25840 / 63/290 / NCTC 10512)</name>
    <dbReference type="NCBI Taxonomy" id="444178"/>
    <lineage>
        <taxon>Bacteria</taxon>
        <taxon>Pseudomonadati</taxon>
        <taxon>Pseudomonadota</taxon>
        <taxon>Alphaproteobacteria</taxon>
        <taxon>Hyphomicrobiales</taxon>
        <taxon>Brucellaceae</taxon>
        <taxon>Brucella/Ochrobactrum group</taxon>
        <taxon>Brucella</taxon>
    </lineage>
</organism>